<proteinExistence type="inferred from homology"/>
<organism>
    <name type="scientific">Methylorubrum extorquens</name>
    <name type="common">Methylobacterium dichloromethanicum</name>
    <name type="synonym">Methylobacterium extorquens</name>
    <dbReference type="NCBI Taxonomy" id="408"/>
    <lineage>
        <taxon>Bacteria</taxon>
        <taxon>Pseudomonadati</taxon>
        <taxon>Pseudomonadota</taxon>
        <taxon>Alphaproteobacteria</taxon>
        <taxon>Hyphomicrobiales</taxon>
        <taxon>Methylobacteriaceae</taxon>
        <taxon>Methylorubrum</taxon>
    </lineage>
</organism>
<name>Y264_METEX</name>
<dbReference type="EC" id="4.2.3.153" evidence="1"/>
<dbReference type="EMBL" id="AY117134">
    <property type="protein sequence ID" value="AAM77053.1"/>
    <property type="molecule type" value="Genomic_DNA"/>
</dbReference>
<dbReference type="RefSeq" id="WP_012752621.1">
    <property type="nucleotide sequence ID" value="NZ_JALJXI010000001.1"/>
</dbReference>
<dbReference type="SMR" id="Q8GEK8"/>
<dbReference type="GO" id="GO:0016829">
    <property type="term" value="F:lyase activity"/>
    <property type="evidence" value="ECO:0007669"/>
    <property type="project" value="UniProtKB-KW"/>
</dbReference>
<dbReference type="Gene3D" id="3.20.20.140">
    <property type="entry name" value="Metal-dependent hydrolases"/>
    <property type="match status" value="1"/>
</dbReference>
<dbReference type="InterPro" id="IPR007565">
    <property type="entry name" value="4HFCP_synth"/>
</dbReference>
<dbReference type="Pfam" id="PF04476">
    <property type="entry name" value="4HFCP_synth"/>
    <property type="match status" value="1"/>
</dbReference>
<dbReference type="PIRSF" id="PIRSF015957">
    <property type="entry name" value="UCP015957"/>
    <property type="match status" value="1"/>
</dbReference>
<protein>
    <recommendedName>
        <fullName evidence="1">Putative (5-formylfuran-3-yl)methyl phosphate synthase</fullName>
        <ecNumber evidence="1">4.2.3.153</ecNumber>
    </recommendedName>
    <alternativeName>
        <fullName evidence="1">4-(hydroxymethyl)-2-furancarboxaldehyde-phosphate synthase</fullName>
        <shortName evidence="1">4-HFC-P synthase</shortName>
    </alternativeName>
</protein>
<feature type="chain" id="PRO_0000134869" description="Putative (5-formylfuran-3-yl)methyl phosphate synthase">
    <location>
        <begin position="1"/>
        <end position="236"/>
    </location>
</feature>
<feature type="active site" description="Schiff-base intermediate with substrate" evidence="1">
    <location>
        <position position="38"/>
    </location>
</feature>
<feature type="active site" description="Proton acceptor" evidence="1">
    <location>
        <position position="94"/>
    </location>
</feature>
<sequence>MSDIVSISSARPRLLVSVRGPDEALTALRAGADLIDAKDPERGALGALPPETVRAIVAGVGGRAVTSAVAGDGTGREIAAAIATIAATGVDFIKIAVGGADDAALAEAAAQAPGRVIGVLFAEDDVAEDGPARLAAAGFVGAMIDTRGKSGTTLTSLMAAPQLAAFVAGCRTHGLMSGLAGSLGLGDIPVLARLDPDYLGFRGGLCRASDRRQALDGARVAQAVEAMRAGPRADAA</sequence>
<accession>Q8GEK8</accession>
<keyword id="KW-0456">Lyase</keyword>
<keyword id="KW-0704">Schiff base</keyword>
<comment type="function">
    <text evidence="1">Catalyzes the formation of 4-(hydroxymethyl)-2-furancarboxaldehyde phosphate (4-HFC-P) from two molecules of glyceraldehyde-3-P (GA-3-P).</text>
</comment>
<comment type="catalytic activity">
    <reaction evidence="1">
        <text>2 D-glyceraldehyde 3-phosphate = 4-(hydroxymethyl)-2-furancarboxaldehyde phosphate + phosphate + 2 H2O</text>
        <dbReference type="Rhea" id="RHEA:43536"/>
        <dbReference type="ChEBI" id="CHEBI:15377"/>
        <dbReference type="ChEBI" id="CHEBI:43474"/>
        <dbReference type="ChEBI" id="CHEBI:59776"/>
        <dbReference type="ChEBI" id="CHEBI:83407"/>
        <dbReference type="EC" id="4.2.3.153"/>
    </reaction>
</comment>
<comment type="similarity">
    <text evidence="2">Belongs to the MfnB family.</text>
</comment>
<reference key="1">
    <citation type="submission" date="2002-06" db="EMBL/GenBank/DDBJ databases">
        <title>Metabolic module approach in genome analysis reveals that Burkholderia fungorum LB400 possesses tetrahydromethanopterin-linked formaldehyde oxidation functions.</title>
        <authorList>
            <person name="Marx C.J."/>
            <person name="Lidstrom M.E."/>
            <person name="Chistoserdova L."/>
        </authorList>
    </citation>
    <scope>NUCLEOTIDE SEQUENCE [GENOMIC DNA]</scope>
</reference>
<evidence type="ECO:0000250" key="1">
    <source>
        <dbReference type="UniProtKB" id="Q58499"/>
    </source>
</evidence>
<evidence type="ECO:0000305" key="2"/>